<keyword id="KW-0165">Cleavage on pair of basic residues</keyword>
<keyword id="KW-1015">Disulfide bond</keyword>
<keyword id="KW-0166">Nematocyst</keyword>
<keyword id="KW-0528">Neurotoxin</keyword>
<keyword id="KW-0964">Secreted</keyword>
<keyword id="KW-0732">Signal</keyword>
<keyword id="KW-0800">Toxin</keyword>
<organism>
    <name type="scientific">Anemonia viridis</name>
    <name type="common">Snakelocks anemone</name>
    <dbReference type="NCBI Taxonomy" id="51769"/>
    <lineage>
        <taxon>Eukaryota</taxon>
        <taxon>Metazoa</taxon>
        <taxon>Cnidaria</taxon>
        <taxon>Anthozoa</taxon>
        <taxon>Hexacorallia</taxon>
        <taxon>Actiniaria</taxon>
        <taxon>Actiniidae</taxon>
        <taxon>Anemonia</taxon>
    </lineage>
</organism>
<name>NA16_ANEVI</name>
<evidence type="ECO:0000250" key="1"/>
<evidence type="ECO:0000255" key="2"/>
<evidence type="ECO:0000303" key="3">
    <source>
    </source>
</evidence>
<evidence type="ECO:0000303" key="4">
    <source>
    </source>
</evidence>
<evidence type="ECO:0000305" key="5"/>
<evidence type="ECO:0000312" key="6">
    <source>
        <dbReference type="EMBL" id="ABW97349.1"/>
    </source>
</evidence>
<dbReference type="EMBL" id="EU124470">
    <property type="protein sequence ID" value="ABW97349.1"/>
    <property type="molecule type" value="Genomic_DNA"/>
</dbReference>
<dbReference type="SMR" id="B1NWT3"/>
<dbReference type="TCDB" id="8.B.17.1.4">
    <property type="family name" value="the sea anemone peptide toxin class iii (shi) family"/>
</dbReference>
<dbReference type="GO" id="GO:0005576">
    <property type="term" value="C:extracellular region"/>
    <property type="evidence" value="ECO:0007669"/>
    <property type="project" value="UniProtKB-SubCell"/>
</dbReference>
<dbReference type="GO" id="GO:0042151">
    <property type="term" value="C:nematocyst"/>
    <property type="evidence" value="ECO:0007669"/>
    <property type="project" value="UniProtKB-SubCell"/>
</dbReference>
<dbReference type="GO" id="GO:0090729">
    <property type="term" value="F:toxin activity"/>
    <property type="evidence" value="ECO:0007669"/>
    <property type="project" value="UniProtKB-KW"/>
</dbReference>
<dbReference type="Gene3D" id="2.20.20.10">
    <property type="entry name" value="Anthopleurin-A"/>
    <property type="match status" value="1"/>
</dbReference>
<dbReference type="InterPro" id="IPR023355">
    <property type="entry name" value="Myo_ane_neurotoxin_sf"/>
</dbReference>
<dbReference type="SUPFAM" id="SSF57392">
    <property type="entry name" value="Defensin-like"/>
    <property type="match status" value="1"/>
</dbReference>
<accession>B1NWT3</accession>
<proteinExistence type="inferred from homology"/>
<sequence length="72" mass="7989">MMNRLLVFLMLGAAFMLVVSAIDQDANEDVNMKRGLPCKCDGDKHMSGTFWMFGCPPGWHSCVVANAFCCKQ</sequence>
<feature type="signal peptide" evidence="2">
    <location>
        <begin position="1"/>
        <end position="21"/>
    </location>
</feature>
<feature type="propeptide" id="PRO_0000433687" evidence="1">
    <location>
        <begin position="22"/>
        <end position="32"/>
    </location>
</feature>
<feature type="chain" id="PRO_5000319677" description="U-actitoxin-Avd1f">
    <location>
        <begin position="35"/>
        <end position="72"/>
    </location>
</feature>
<feature type="disulfide bond" evidence="1">
    <location>
        <begin position="38"/>
        <end position="69"/>
    </location>
</feature>
<feature type="disulfide bond" evidence="1">
    <location>
        <begin position="40"/>
        <end position="62"/>
    </location>
</feature>
<feature type="disulfide bond" evidence="1">
    <location>
        <begin position="55"/>
        <end position="70"/>
    </location>
</feature>
<comment type="subcellular location">
    <subcellularLocation>
        <location evidence="5">Secreted</location>
    </subcellularLocation>
    <subcellularLocation>
        <location evidence="5">Nematocyst</location>
    </subcellularLocation>
</comment>
<comment type="similarity">
    <text evidence="5">Belongs to the sea anemone sodium channel inhibitory toxin family. Type I subfamily.</text>
</comment>
<comment type="caution">
    <text evidence="5">Opinions are divided on whether Anemonia viridis (Forsskal, 1775) and Anemonia sulcata (Pennant, 1777) are separate species.</text>
</comment>
<protein>
    <recommendedName>
        <fullName evidence="4">U-actitoxin-Avd1f</fullName>
        <shortName evidence="4">U-AITX-Avd1f</shortName>
    </recommendedName>
    <alternativeName>
        <fullName evidence="3">Av6</fullName>
    </alternativeName>
    <alternativeName>
        <fullName evidence="6">Neurotoxin 6</fullName>
    </alternativeName>
</protein>
<reference key="1">
    <citation type="journal article" date="2008" name="Mol. Biol. Evol.">
        <title>Concerted evolution of sea anemone neurotoxin genes is revealed through analysis of the Nematostella vectensis genome.</title>
        <authorList>
            <person name="Moran Y."/>
            <person name="Weinberger H."/>
            <person name="Sullivan J.C."/>
            <person name="Reitzel A.M."/>
            <person name="Finnerty J.R."/>
            <person name="Gurevitz M."/>
        </authorList>
    </citation>
    <scope>NUCLEOTIDE SEQUENCE [GENOMIC DNA]</scope>
</reference>
<reference key="2">
    <citation type="journal article" date="2012" name="Toxicon">
        <title>Development of a rational nomenclature for naming peptide and protein toxins from sea anemones.</title>
        <authorList>
            <person name="Oliveira J.S."/>
            <person name="Fuentes-Silva D."/>
            <person name="King G.F."/>
        </authorList>
    </citation>
    <scope>NOMENCLATURE</scope>
</reference>